<reference key="1">
    <citation type="journal article" date="2005" name="Nature">
        <title>The genome sequence of the rice blast fungus Magnaporthe grisea.</title>
        <authorList>
            <person name="Dean R.A."/>
            <person name="Talbot N.J."/>
            <person name="Ebbole D.J."/>
            <person name="Farman M.L."/>
            <person name="Mitchell T.K."/>
            <person name="Orbach M.J."/>
            <person name="Thon M.R."/>
            <person name="Kulkarni R."/>
            <person name="Xu J.-R."/>
            <person name="Pan H."/>
            <person name="Read N.D."/>
            <person name="Lee Y.-H."/>
            <person name="Carbone I."/>
            <person name="Brown D."/>
            <person name="Oh Y.Y."/>
            <person name="Donofrio N."/>
            <person name="Jeong J.S."/>
            <person name="Soanes D.M."/>
            <person name="Djonovic S."/>
            <person name="Kolomiets E."/>
            <person name="Rehmeyer C."/>
            <person name="Li W."/>
            <person name="Harding M."/>
            <person name="Kim S."/>
            <person name="Lebrun M.-H."/>
            <person name="Bohnert H."/>
            <person name="Coughlan S."/>
            <person name="Butler J."/>
            <person name="Calvo S.E."/>
            <person name="Ma L.-J."/>
            <person name="Nicol R."/>
            <person name="Purcell S."/>
            <person name="Nusbaum C."/>
            <person name="Galagan J.E."/>
            <person name="Birren B.W."/>
        </authorList>
    </citation>
    <scope>NUCLEOTIDE SEQUENCE [LARGE SCALE GENOMIC DNA]</scope>
    <source>
        <strain>70-15 / ATCC MYA-4617 / FGSC 8958</strain>
    </source>
</reference>
<keyword id="KW-0963">Cytoplasm</keyword>
<keyword id="KW-0479">Metal-binding</keyword>
<keyword id="KW-0539">Nucleus</keyword>
<keyword id="KW-1185">Reference proteome</keyword>
<keyword id="KW-0862">Zinc</keyword>
<keyword id="KW-0863">Zinc-finger</keyword>
<comment type="function">
    <text evidence="1">Involved in the proteasome-dependent degradation of fructose-1,6-bisphosphatase.</text>
</comment>
<comment type="subcellular location">
    <subcellularLocation>
        <location evidence="1">Cytoplasm</location>
    </subcellularLocation>
    <subcellularLocation>
        <location evidence="1">Nucleus</location>
    </subcellularLocation>
</comment>
<comment type="similarity">
    <text evidence="5">Belongs to the FYV10 family.</text>
</comment>
<feature type="chain" id="PRO_0000292461" description="Protein FYV10">
    <location>
        <begin position="1"/>
        <end position="410"/>
    </location>
</feature>
<feature type="domain" description="LisH" evidence="3">
    <location>
        <begin position="125"/>
        <end position="157"/>
    </location>
</feature>
<feature type="domain" description="CTLH" evidence="2">
    <location>
        <begin position="163"/>
        <end position="220"/>
    </location>
</feature>
<feature type="zinc finger region" description="RING-Gid-type" evidence="4">
    <location>
        <begin position="334"/>
        <end position="395"/>
    </location>
</feature>
<name>FYV10_PYRO7</name>
<protein>
    <recommendedName>
        <fullName>Protein FYV10</fullName>
    </recommendedName>
</protein>
<gene>
    <name type="primary">FYV10</name>
    <name type="ORF">MGG_01665</name>
</gene>
<organism>
    <name type="scientific">Pyricularia oryzae (strain 70-15 / ATCC MYA-4617 / FGSC 8958)</name>
    <name type="common">Rice blast fungus</name>
    <name type="synonym">Magnaporthe oryzae</name>
    <dbReference type="NCBI Taxonomy" id="242507"/>
    <lineage>
        <taxon>Eukaryota</taxon>
        <taxon>Fungi</taxon>
        <taxon>Dikarya</taxon>
        <taxon>Ascomycota</taxon>
        <taxon>Pezizomycotina</taxon>
        <taxon>Sordariomycetes</taxon>
        <taxon>Sordariomycetidae</taxon>
        <taxon>Magnaporthales</taxon>
        <taxon>Pyriculariaceae</taxon>
        <taxon>Pyricularia</taxon>
    </lineage>
</organism>
<proteinExistence type="inferred from homology"/>
<accession>A4RK04</accession>
<accession>G4MUF7</accession>
<evidence type="ECO:0000250" key="1"/>
<evidence type="ECO:0000255" key="2">
    <source>
        <dbReference type="PROSITE-ProRule" id="PRU00058"/>
    </source>
</evidence>
<evidence type="ECO:0000255" key="3">
    <source>
        <dbReference type="PROSITE-ProRule" id="PRU00126"/>
    </source>
</evidence>
<evidence type="ECO:0000255" key="4">
    <source>
        <dbReference type="PROSITE-ProRule" id="PRU01215"/>
    </source>
</evidence>
<evidence type="ECO:0000305" key="5"/>
<dbReference type="EMBL" id="CM001232">
    <property type="protein sequence ID" value="EHA54844.1"/>
    <property type="molecule type" value="Genomic_DNA"/>
</dbReference>
<dbReference type="RefSeq" id="XP_003714651.1">
    <property type="nucleotide sequence ID" value="XM_003714603.1"/>
</dbReference>
<dbReference type="SMR" id="A4RK04"/>
<dbReference type="FunCoup" id="A4RK04">
    <property type="interactions" value="902"/>
</dbReference>
<dbReference type="STRING" id="242507.A4RK04"/>
<dbReference type="EnsemblFungi" id="MGG_01665T0">
    <property type="protein sequence ID" value="MGG_01665T0"/>
    <property type="gene ID" value="MGG_01665"/>
</dbReference>
<dbReference type="GeneID" id="2679342"/>
<dbReference type="KEGG" id="mgr:MGG_01665"/>
<dbReference type="VEuPathDB" id="FungiDB:MGG_01665"/>
<dbReference type="eggNOG" id="KOG0396">
    <property type="taxonomic scope" value="Eukaryota"/>
</dbReference>
<dbReference type="HOGENOM" id="CLU_027445_2_0_1"/>
<dbReference type="InParanoid" id="A4RK04"/>
<dbReference type="OMA" id="ANHETAR"/>
<dbReference type="OrthoDB" id="1933455at2759"/>
<dbReference type="Proteomes" id="UP000009058">
    <property type="component" value="Chromosome 2"/>
</dbReference>
<dbReference type="GO" id="GO:0005737">
    <property type="term" value="C:cytoplasm"/>
    <property type="evidence" value="ECO:0000250"/>
    <property type="project" value="PAMGO_MGG"/>
</dbReference>
<dbReference type="GO" id="GO:0005829">
    <property type="term" value="C:cytosol"/>
    <property type="evidence" value="ECO:0000250"/>
    <property type="project" value="PAMGO_MGG"/>
</dbReference>
<dbReference type="GO" id="GO:0034657">
    <property type="term" value="C:GID complex"/>
    <property type="evidence" value="ECO:0007669"/>
    <property type="project" value="TreeGrafter"/>
</dbReference>
<dbReference type="GO" id="GO:0005634">
    <property type="term" value="C:nucleus"/>
    <property type="evidence" value="ECO:0000250"/>
    <property type="project" value="PAMGO_MGG"/>
</dbReference>
<dbReference type="GO" id="GO:0061630">
    <property type="term" value="F:ubiquitin protein ligase activity"/>
    <property type="evidence" value="ECO:0007669"/>
    <property type="project" value="InterPro"/>
</dbReference>
<dbReference type="GO" id="GO:0008270">
    <property type="term" value="F:zinc ion binding"/>
    <property type="evidence" value="ECO:0007669"/>
    <property type="project" value="UniProtKB-KW"/>
</dbReference>
<dbReference type="GO" id="GO:0045721">
    <property type="term" value="P:negative regulation of gluconeogenesis"/>
    <property type="evidence" value="ECO:0000250"/>
    <property type="project" value="PAMGO_MGG"/>
</dbReference>
<dbReference type="GO" id="GO:0043161">
    <property type="term" value="P:proteasome-mediated ubiquitin-dependent protein catabolic process"/>
    <property type="evidence" value="ECO:0000250"/>
    <property type="project" value="PAMGO_MGG"/>
</dbReference>
<dbReference type="InterPro" id="IPR013144">
    <property type="entry name" value="CRA_dom"/>
</dbReference>
<dbReference type="InterPro" id="IPR024964">
    <property type="entry name" value="CTLH/CRA"/>
</dbReference>
<dbReference type="InterPro" id="IPR006595">
    <property type="entry name" value="CTLH_C"/>
</dbReference>
<dbReference type="InterPro" id="IPR045098">
    <property type="entry name" value="Fyv10_fam"/>
</dbReference>
<dbReference type="InterPro" id="IPR006594">
    <property type="entry name" value="LisH"/>
</dbReference>
<dbReference type="InterPro" id="IPR044063">
    <property type="entry name" value="ZF_RING_GID"/>
</dbReference>
<dbReference type="PANTHER" id="PTHR12170:SF2">
    <property type="entry name" value="E3 UBIQUITIN-PROTEIN TRANSFERASE MAEA"/>
    <property type="match status" value="1"/>
</dbReference>
<dbReference type="PANTHER" id="PTHR12170">
    <property type="entry name" value="MACROPHAGE ERYTHROBLAST ATTACHER-RELATED"/>
    <property type="match status" value="1"/>
</dbReference>
<dbReference type="Pfam" id="PF10607">
    <property type="entry name" value="CTLH"/>
    <property type="match status" value="1"/>
</dbReference>
<dbReference type="SMART" id="SM00757">
    <property type="entry name" value="CRA"/>
    <property type="match status" value="1"/>
</dbReference>
<dbReference type="SMART" id="SM00668">
    <property type="entry name" value="CTLH"/>
    <property type="match status" value="1"/>
</dbReference>
<dbReference type="PROSITE" id="PS50897">
    <property type="entry name" value="CTLH"/>
    <property type="match status" value="1"/>
</dbReference>
<dbReference type="PROSITE" id="PS50896">
    <property type="entry name" value="LISH"/>
    <property type="match status" value="1"/>
</dbReference>
<dbReference type="PROSITE" id="PS51867">
    <property type="entry name" value="ZF_RING_GID"/>
    <property type="match status" value="1"/>
</dbReference>
<sequence>MADHQTTKIDKSNHLLLDQTLLRLPYDLMRKNFRNAHFVVEHESKAITKLLKDTATGSLKGKHSSDDVLKNIDAMLAKAKGIKRKLQACSDEEARLYRQLGARIKHVGEVVSMETVDDVRYEQWSRTRLDRLIVDYMLRHGYNESACALADDRGIRDLVDIDTFIHMSRIQESLANRSVTEALAWCHENKKELRKIDSNFEFMLRFQQYIELVRSQTLPKVLEAITHARKYLIPFKETYPHEVNQAAGLLAYPPEQTSDSYSNLWGQERWEMLSTLFIETHHRLLSLPSFPLLHIALSSGLSALKTPACHTAGARDLADTPNSAPGNSLDSSMCPICSAELNELAENVPYAHHSKSHVEHDLVLLPNDRVYGKARLEEYARKSGLPHNCVKDLRTGEIYPASRMKKVFIT</sequence>